<gene>
    <name type="primary">RNA1</name>
    <name type="ordered locus">YMR235C</name>
    <name type="ORF">YM9959.17C</name>
</gene>
<keyword id="KW-0963">Cytoplasm</keyword>
<keyword id="KW-0343">GTPase activation</keyword>
<keyword id="KW-0433">Leucine-rich repeat</keyword>
<keyword id="KW-0597">Phosphoprotein</keyword>
<keyword id="KW-1185">Reference proteome</keyword>
<keyword id="KW-0677">Repeat</keyword>
<dbReference type="EMBL" id="M27143">
    <property type="protein sequence ID" value="AAA34985.1"/>
    <property type="molecule type" value="Genomic_DNA"/>
</dbReference>
<dbReference type="EMBL" id="M27142">
    <property type="protein sequence ID" value="AAA34983.1"/>
    <property type="molecule type" value="Genomic_DNA"/>
</dbReference>
<dbReference type="EMBL" id="X17376">
    <property type="protein sequence ID" value="CAA35248.1"/>
    <property type="status" value="ALT_FRAME"/>
    <property type="molecule type" value="Genomic_DNA"/>
</dbReference>
<dbReference type="EMBL" id="Z49939">
    <property type="protein sequence ID" value="CAA90206.1"/>
    <property type="molecule type" value="Genomic_DNA"/>
</dbReference>
<dbReference type="EMBL" id="X57160">
    <property type="protein sequence ID" value="CAA40449.1"/>
    <property type="molecule type" value="Genomic_DNA"/>
</dbReference>
<dbReference type="EMBL" id="BK006946">
    <property type="protein sequence ID" value="DAA10135.1"/>
    <property type="molecule type" value="Genomic_DNA"/>
</dbReference>
<dbReference type="PIR" id="A32492">
    <property type="entry name" value="BVBYN1"/>
</dbReference>
<dbReference type="RefSeq" id="NP_013962.1">
    <property type="nucleotide sequence ID" value="NM_001182742.1"/>
</dbReference>
<dbReference type="SMR" id="P11745"/>
<dbReference type="BioGRID" id="35413">
    <property type="interactions" value="716"/>
</dbReference>
<dbReference type="DIP" id="DIP-2509N"/>
<dbReference type="FunCoup" id="P11745">
    <property type="interactions" value="201"/>
</dbReference>
<dbReference type="IntAct" id="P11745">
    <property type="interactions" value="22"/>
</dbReference>
<dbReference type="MINT" id="P11745"/>
<dbReference type="STRING" id="4932.YMR235C"/>
<dbReference type="iPTMnet" id="P11745"/>
<dbReference type="PaxDb" id="4932-YMR235C"/>
<dbReference type="PeptideAtlas" id="P11745"/>
<dbReference type="EnsemblFungi" id="YMR235C_mRNA">
    <property type="protein sequence ID" value="YMR235C"/>
    <property type="gene ID" value="YMR235C"/>
</dbReference>
<dbReference type="GeneID" id="855275"/>
<dbReference type="KEGG" id="sce:YMR235C"/>
<dbReference type="AGR" id="SGD:S000004848"/>
<dbReference type="SGD" id="S000004848">
    <property type="gene designation" value="RNA1"/>
</dbReference>
<dbReference type="VEuPathDB" id="FungiDB:YMR235C"/>
<dbReference type="eggNOG" id="KOG1909">
    <property type="taxonomic scope" value="Eukaryota"/>
</dbReference>
<dbReference type="GeneTree" id="ENSGT00440000039203"/>
<dbReference type="HOGENOM" id="CLU_028747_3_0_1"/>
<dbReference type="InParanoid" id="P11745"/>
<dbReference type="OMA" id="NGSMEAW"/>
<dbReference type="OrthoDB" id="184583at2759"/>
<dbReference type="BioCyc" id="YEAST:G3O-32916-MONOMER"/>
<dbReference type="Reactome" id="R-SCE-9615933">
    <property type="pathway name" value="Postmitotic nuclear pore complex (NPC) reformation"/>
</dbReference>
<dbReference type="Reactome" id="R-SCE-9793242">
    <property type="pathway name" value="SUMOylation of nuclear envelope proteins"/>
</dbReference>
<dbReference type="BioGRID-ORCS" id="855275">
    <property type="hits" value="7 hits in 10 CRISPR screens"/>
</dbReference>
<dbReference type="CD-CODE" id="E03F929F">
    <property type="entry name" value="Stress granule"/>
</dbReference>
<dbReference type="PRO" id="PR:P11745"/>
<dbReference type="Proteomes" id="UP000002311">
    <property type="component" value="Chromosome XIII"/>
</dbReference>
<dbReference type="RNAct" id="P11745">
    <property type="molecule type" value="protein"/>
</dbReference>
<dbReference type="GO" id="GO:0000781">
    <property type="term" value="C:chromosome, telomeric region"/>
    <property type="evidence" value="ECO:0007669"/>
    <property type="project" value="GOC"/>
</dbReference>
<dbReference type="GO" id="GO:0005829">
    <property type="term" value="C:cytosol"/>
    <property type="evidence" value="ECO:0000314"/>
    <property type="project" value="SGD"/>
</dbReference>
<dbReference type="GO" id="GO:0005634">
    <property type="term" value="C:nucleus"/>
    <property type="evidence" value="ECO:0000314"/>
    <property type="project" value="SGD"/>
</dbReference>
<dbReference type="GO" id="GO:0048471">
    <property type="term" value="C:perinuclear region of cytoplasm"/>
    <property type="evidence" value="ECO:0000318"/>
    <property type="project" value="GO_Central"/>
</dbReference>
<dbReference type="GO" id="GO:0005096">
    <property type="term" value="F:GTPase activator activity"/>
    <property type="evidence" value="ECO:0000314"/>
    <property type="project" value="SGD"/>
</dbReference>
<dbReference type="GO" id="GO:0031267">
    <property type="term" value="F:small GTPase binding"/>
    <property type="evidence" value="ECO:0000314"/>
    <property type="project" value="SGD"/>
</dbReference>
<dbReference type="GO" id="GO:0051168">
    <property type="term" value="P:nuclear export"/>
    <property type="evidence" value="ECO:0000318"/>
    <property type="project" value="GO_Central"/>
</dbReference>
<dbReference type="GO" id="GO:0006606">
    <property type="term" value="P:protein import into nucleus"/>
    <property type="evidence" value="ECO:0000314"/>
    <property type="project" value="SGD"/>
</dbReference>
<dbReference type="GO" id="GO:0000054">
    <property type="term" value="P:ribosomal subunit export from nucleus"/>
    <property type="evidence" value="ECO:0000315"/>
    <property type="project" value="SGD"/>
</dbReference>
<dbReference type="GO" id="GO:0006404">
    <property type="term" value="P:RNA import into nucleus"/>
    <property type="evidence" value="ECO:0000315"/>
    <property type="project" value="SGD"/>
</dbReference>
<dbReference type="GO" id="GO:0031509">
    <property type="term" value="P:subtelomeric heterochromatin formation"/>
    <property type="evidence" value="ECO:0000315"/>
    <property type="project" value="SGD"/>
</dbReference>
<dbReference type="GO" id="GO:0006409">
    <property type="term" value="P:tRNA export from nucleus"/>
    <property type="evidence" value="ECO:0000315"/>
    <property type="project" value="SGD"/>
</dbReference>
<dbReference type="FunFam" id="3.80.10.10:FF:000572">
    <property type="entry name" value="Ran GTPase-activating protein 1"/>
    <property type="match status" value="1"/>
</dbReference>
<dbReference type="Gene3D" id="3.80.10.10">
    <property type="entry name" value="Ribonuclease Inhibitor"/>
    <property type="match status" value="1"/>
</dbReference>
<dbReference type="InterPro" id="IPR001611">
    <property type="entry name" value="Leu-rich_rpt"/>
</dbReference>
<dbReference type="InterPro" id="IPR032675">
    <property type="entry name" value="LRR_dom_sf"/>
</dbReference>
<dbReference type="InterPro" id="IPR027038">
    <property type="entry name" value="RanGap"/>
</dbReference>
<dbReference type="PANTHER" id="PTHR24113">
    <property type="entry name" value="RAN GTPASE-ACTIVATING PROTEIN 1"/>
    <property type="match status" value="1"/>
</dbReference>
<dbReference type="PANTHER" id="PTHR24113:SF12">
    <property type="entry name" value="RAN GTPASE-ACTIVATING PROTEIN 1"/>
    <property type="match status" value="1"/>
</dbReference>
<dbReference type="Pfam" id="PF13516">
    <property type="entry name" value="LRR_6"/>
    <property type="match status" value="2"/>
</dbReference>
<dbReference type="SMART" id="SM00368">
    <property type="entry name" value="LRR_RI"/>
    <property type="match status" value="6"/>
</dbReference>
<dbReference type="SUPFAM" id="SSF52047">
    <property type="entry name" value="RNI-like"/>
    <property type="match status" value="1"/>
</dbReference>
<evidence type="ECO:0000256" key="1">
    <source>
        <dbReference type="SAM" id="MobiDB-lite"/>
    </source>
</evidence>
<evidence type="ECO:0000269" key="2">
    <source>
    </source>
</evidence>
<evidence type="ECO:0000269" key="3">
    <source>
    </source>
</evidence>
<evidence type="ECO:0000305" key="4"/>
<evidence type="ECO:0007744" key="5">
    <source>
    </source>
</evidence>
<evidence type="ECO:0007744" key="6">
    <source>
    </source>
</evidence>
<name>RNA1_YEAST</name>
<comment type="function">
    <text>GTPase activator for the nuclear Ras-related regulatory protein GSP1 (Ran), converting it to the putatively inactive GDP-bound state.</text>
</comment>
<comment type="subcellular location">
    <subcellularLocation>
        <location>Cytoplasm</location>
    </subcellularLocation>
</comment>
<comment type="disruption phenotype">
    <text evidence="3">Causes conditional lethality. Strains bearing this mutation do not grow at temperatures exceeding 30 degrees Celsius.</text>
</comment>
<comment type="miscellaneous">
    <text evidence="2">Present with 52200 molecules/cell in log phase SD medium.</text>
</comment>
<comment type="similarity">
    <text evidence="4">Belongs to the RNA1 family.</text>
</comment>
<comment type="sequence caution" evidence="4">
    <conflict type="frameshift">
        <sequence resource="EMBL-CDS" id="CAA35248"/>
    </conflict>
</comment>
<reference key="1">
    <citation type="journal article" date="1989" name="Mol. Cell. Biol.">
        <title>Structural and functional analyses of Saccharomyces cerevisiae wild-type and mutant RNA1 genes.</title>
        <authorList>
            <person name="Traglia H.M."/>
            <person name="Atkinson N.S."/>
            <person name="Hopper A.K."/>
        </authorList>
    </citation>
    <scope>NUCLEOTIDE SEQUENCE [GENOMIC DNA]</scope>
    <scope>DISRUPTION PHENOTYPE</scope>
</reference>
<reference key="2">
    <citation type="submission" date="1989-12" db="EMBL/GenBank/DDBJ databases">
        <authorList>
            <person name="Koh S.S."/>
            <person name="Young S.R."/>
            <person name="Young H.S."/>
            <person name="Hyen S.K."/>
        </authorList>
    </citation>
    <scope>NUCLEOTIDE SEQUENCE [GENOMIC DNA]</scope>
    <source>
        <strain>SL560-3A</strain>
    </source>
</reference>
<reference key="3">
    <citation type="journal article" date="1997" name="Nature">
        <title>The nucleotide sequence of Saccharomyces cerevisiae chromosome XIII.</title>
        <authorList>
            <person name="Bowman S."/>
            <person name="Churcher C.M."/>
            <person name="Badcock K."/>
            <person name="Brown D."/>
            <person name="Chillingworth T."/>
            <person name="Connor R."/>
            <person name="Dedman K."/>
            <person name="Devlin K."/>
            <person name="Gentles S."/>
            <person name="Hamlin N."/>
            <person name="Hunt S."/>
            <person name="Jagels K."/>
            <person name="Lye G."/>
            <person name="Moule S."/>
            <person name="Odell C."/>
            <person name="Pearson D."/>
            <person name="Rajandream M.A."/>
            <person name="Rice P."/>
            <person name="Skelton J."/>
            <person name="Walsh S.V."/>
            <person name="Whitehead S."/>
            <person name="Barrell B.G."/>
        </authorList>
    </citation>
    <scope>NUCLEOTIDE SEQUENCE [LARGE SCALE GENOMIC DNA]</scope>
    <source>
        <strain>ATCC 204508 / S288c</strain>
    </source>
</reference>
<reference key="4">
    <citation type="journal article" date="2014" name="G3 (Bethesda)">
        <title>The reference genome sequence of Saccharomyces cerevisiae: Then and now.</title>
        <authorList>
            <person name="Engel S.R."/>
            <person name="Dietrich F.S."/>
            <person name="Fisk D.G."/>
            <person name="Binkley G."/>
            <person name="Balakrishnan R."/>
            <person name="Costanzo M.C."/>
            <person name="Dwight S.S."/>
            <person name="Hitz B.C."/>
            <person name="Karra K."/>
            <person name="Nash R.S."/>
            <person name="Weng S."/>
            <person name="Wong E.D."/>
            <person name="Lloyd P."/>
            <person name="Skrzypek M.S."/>
            <person name="Miyasato S.R."/>
            <person name="Simison M."/>
            <person name="Cherry J.M."/>
        </authorList>
    </citation>
    <scope>GENOME REANNOTATION</scope>
    <source>
        <strain>ATCC 204508 / S288c</strain>
    </source>
</reference>
<reference key="5">
    <citation type="submission" date="1991-01" db="EMBL/GenBank/DDBJ databases">
        <authorList>
            <person name="Crouch R.J."/>
        </authorList>
    </citation>
    <scope>NUCLEOTIDE SEQUENCE [GENOMIC DNA] OF 188-407</scope>
    <source>
        <strain>ATCC 204510 / AB320</strain>
    </source>
</reference>
<reference key="6">
    <citation type="journal article" date="1992" name="Mol. Gen. Genet.">
        <title>The yeast RNA1 protein, necessary for RNA processing, is homologous to the human ribonuclease/angiogenin inhibitor (RAI).</title>
        <authorList>
            <person name="Schneider R."/>
            <person name="Schweiger M."/>
        </authorList>
    </citation>
    <scope>DOMAINS LEUCINE-RICH REPEATS</scope>
</reference>
<reference key="7">
    <citation type="journal article" date="2003" name="Nature">
        <title>Global analysis of protein expression in yeast.</title>
        <authorList>
            <person name="Ghaemmaghami S."/>
            <person name="Huh W.-K."/>
            <person name="Bower K."/>
            <person name="Howson R.W."/>
            <person name="Belle A."/>
            <person name="Dephoure N."/>
            <person name="O'Shea E.K."/>
            <person name="Weissman J.S."/>
        </authorList>
    </citation>
    <scope>LEVEL OF PROTEIN EXPRESSION [LARGE SCALE ANALYSIS]</scope>
</reference>
<reference key="8">
    <citation type="journal article" date="2007" name="J. Proteome Res.">
        <title>Large-scale phosphorylation analysis of alpha-factor-arrested Saccharomyces cerevisiae.</title>
        <authorList>
            <person name="Li X."/>
            <person name="Gerber S.A."/>
            <person name="Rudner A.D."/>
            <person name="Beausoleil S.A."/>
            <person name="Haas W."/>
            <person name="Villen J."/>
            <person name="Elias J.E."/>
            <person name="Gygi S.P."/>
        </authorList>
    </citation>
    <scope>PHOSPHORYLATION [LARGE SCALE ANALYSIS] AT SER-360</scope>
    <scope>IDENTIFICATION BY MASS SPECTROMETRY [LARGE SCALE ANALYSIS]</scope>
    <source>
        <strain>ADR376</strain>
    </source>
</reference>
<reference key="9">
    <citation type="journal article" date="2009" name="Science">
        <title>Global analysis of Cdk1 substrate phosphorylation sites provides insights into evolution.</title>
        <authorList>
            <person name="Holt L.J."/>
            <person name="Tuch B.B."/>
            <person name="Villen J."/>
            <person name="Johnson A.D."/>
            <person name="Gygi S.P."/>
            <person name="Morgan D.O."/>
        </authorList>
    </citation>
    <scope>PHOSPHORYLATION [LARGE SCALE ANALYSIS] AT SER-360</scope>
    <scope>IDENTIFICATION BY MASS SPECTROMETRY [LARGE SCALE ANALYSIS]</scope>
</reference>
<feature type="chain" id="PRO_0000056742" description="Ran GTPase-activating protein 1">
    <location>
        <begin position="1"/>
        <end position="407"/>
    </location>
</feature>
<feature type="repeat" description="LRR 1">
    <location>
        <begin position="11"/>
        <end position="39"/>
    </location>
</feature>
<feature type="repeat" description="LRR 2">
    <location>
        <begin position="40"/>
        <end position="67"/>
    </location>
</feature>
<feature type="repeat" description="LRR 3">
    <location>
        <begin position="68"/>
        <end position="101"/>
    </location>
</feature>
<feature type="repeat" description="LRR 4">
    <location>
        <begin position="102"/>
        <end position="133"/>
    </location>
</feature>
<feature type="repeat" description="LRR 5">
    <location>
        <begin position="134"/>
        <end position="166"/>
    </location>
</feature>
<feature type="repeat" description="LRR 6">
    <location>
        <begin position="167"/>
        <end position="197"/>
    </location>
</feature>
<feature type="repeat" description="LRR 7">
    <location>
        <begin position="198"/>
        <end position="226"/>
    </location>
</feature>
<feature type="repeat" description="LRR 8">
    <location>
        <begin position="227"/>
        <end position="256"/>
    </location>
</feature>
<feature type="repeat" description="LRR 9">
    <location>
        <begin position="257"/>
        <end position="285"/>
    </location>
</feature>
<feature type="repeat" description="LRR 10">
    <location>
        <begin position="286"/>
        <end position="315"/>
    </location>
</feature>
<feature type="repeat" description="LRR 11">
    <location>
        <begin position="316"/>
        <end position="346"/>
    </location>
</feature>
<feature type="region of interest" description="Disordered" evidence="1">
    <location>
        <begin position="353"/>
        <end position="378"/>
    </location>
</feature>
<feature type="modified residue" description="Phosphoserine" evidence="5 6">
    <location>
        <position position="360"/>
    </location>
</feature>
<feature type="sequence variant" description="In mutant RNA1-1.">
    <original>S</original>
    <variation>F</variation>
    <location>
        <position position="17"/>
    </location>
</feature>
<feature type="sequence variant" description="In mutant RNA1-1.">
    <original>A</original>
    <variation>V</variation>
    <location>
        <position position="194"/>
    </location>
</feature>
<feature type="sequence conflict" description="In Ref. 2; CAA35248." evidence="4" ref="2">
    <original>K</original>
    <variation>E</variation>
    <location>
        <position position="42"/>
    </location>
</feature>
<feature type="sequence conflict" description="In Ref. 5; CAA40449." evidence="4" ref="5">
    <original>L</original>
    <variation>S</variation>
    <location>
        <position position="222"/>
    </location>
</feature>
<proteinExistence type="evidence at protein level"/>
<sequence>MATLHFVPQHEEEQVYSISGKALKLTTSDDIKPYLEELAALKTCTKLDLSGNTIGTEASEALAKCIAENTQVRESLVEVNFADLYTSRLVDEVVDSLKFLLPVLLKCPHLEIVNLSDNAFGLRTIELLEDYIAHAVNIKHLILSNNGMGPFAGERIGKALFHLAQNKKAASKPFLETFICGRNRLENGSAVYLALGLKSHSEGLKVVKLYQNGIRPKGVATLIHYGLQYLKNLEILDLQDNTFTKHASLILAKALPTWKDSLFELNLNDCLLKTAGSDEVFKVFTEVKFPNLHVLKFEYNEMAQETIEVSFLPAMEKGNLPELEKLEINGNRLDEDSDALDLLQSKFDDLEVDDFEEVDSEDEEGEDEEDEDEDEKLEEIETERLEKELLEVQVDDLAERLAETEIK</sequence>
<organism>
    <name type="scientific">Saccharomyces cerevisiae (strain ATCC 204508 / S288c)</name>
    <name type="common">Baker's yeast</name>
    <dbReference type="NCBI Taxonomy" id="559292"/>
    <lineage>
        <taxon>Eukaryota</taxon>
        <taxon>Fungi</taxon>
        <taxon>Dikarya</taxon>
        <taxon>Ascomycota</taxon>
        <taxon>Saccharomycotina</taxon>
        <taxon>Saccharomycetes</taxon>
        <taxon>Saccharomycetales</taxon>
        <taxon>Saccharomycetaceae</taxon>
        <taxon>Saccharomyces</taxon>
    </lineage>
</organism>
<accession>P11745</accession>
<accession>D6W061</accession>
<protein>
    <recommendedName>
        <fullName>Ran GTPase-activating protein 1</fullName>
    </recommendedName>
    <alternativeName>
        <fullName>Protein involved in RNA production/processing</fullName>
    </alternativeName>
</protein>